<evidence type="ECO:0000255" key="1">
    <source>
        <dbReference type="HAMAP-Rule" id="MF_00523"/>
    </source>
</evidence>
<evidence type="ECO:0000256" key="2">
    <source>
        <dbReference type="SAM" id="MobiDB-lite"/>
    </source>
</evidence>
<feature type="chain" id="PRO_0000264426" description="UDP-3-O-acylglucosamine N-acyltransferase 2">
    <location>
        <begin position="1"/>
        <end position="373"/>
    </location>
</feature>
<feature type="region of interest" description="Disordered" evidence="2">
    <location>
        <begin position="346"/>
        <end position="373"/>
    </location>
</feature>
<feature type="compositionally biased region" description="Low complexity" evidence="2">
    <location>
        <begin position="350"/>
        <end position="362"/>
    </location>
</feature>
<feature type="active site" description="Proton acceptor" evidence="1">
    <location>
        <position position="257"/>
    </location>
</feature>
<gene>
    <name evidence="1" type="primary">lpxD2</name>
    <name type="ordered locus">RPC_2464</name>
</gene>
<keyword id="KW-0012">Acyltransferase</keyword>
<keyword id="KW-0441">Lipid A biosynthesis</keyword>
<keyword id="KW-0444">Lipid biosynthesis</keyword>
<keyword id="KW-0443">Lipid metabolism</keyword>
<keyword id="KW-0677">Repeat</keyword>
<keyword id="KW-0808">Transferase</keyword>
<protein>
    <recommendedName>
        <fullName evidence="1">UDP-3-O-acylglucosamine N-acyltransferase 2</fullName>
        <ecNumber evidence="1">2.3.1.191</ecNumber>
    </recommendedName>
</protein>
<accession>Q215C1</accession>
<sequence>MSESGFFLDAVGLSVGDIVALTGATPRDGADLSRAISDLAPLDRAGIADLSFIAETKYAGVLAATQAGAVLTTERFAHLAPESVAVLRIAKPYEAFVAVARRLYPSALRPTSLFGTLGVAPGAVVHPSAKLAAGVTVDPGAVIGPRAEIGKGSLIGANAVIGPHVKIGADCAIGAGCTVTHSEIGDRVIVHPGSQIGQDGFGYISSANGHTKVPQIGRVVIHDDVEIGAGSNIDRGGMRDTVIGQGTKIDNLCQIGHNCVIGRHCIIVAQSGLSGSVTVEDFAVLGARTGVIPHITIGKGAMLASRSTVYSNVPAGAVWGGFPAQSKRQWMREVVALRQLAARDHDGRTAASAEAAAPSSDATGVDQPDQAAS</sequence>
<name>LPXD2_RHOPB</name>
<dbReference type="EC" id="2.3.1.191" evidence="1"/>
<dbReference type="EMBL" id="CP000301">
    <property type="protein sequence ID" value="ABD88015.1"/>
    <property type="molecule type" value="Genomic_DNA"/>
</dbReference>
<dbReference type="SMR" id="Q215C1"/>
<dbReference type="STRING" id="316056.RPC_2464"/>
<dbReference type="KEGG" id="rpc:RPC_2464"/>
<dbReference type="eggNOG" id="COG1044">
    <property type="taxonomic scope" value="Bacteria"/>
</dbReference>
<dbReference type="HOGENOM" id="CLU_049865_0_2_5"/>
<dbReference type="OrthoDB" id="9784739at2"/>
<dbReference type="UniPathway" id="UPA00973"/>
<dbReference type="GO" id="GO:0016020">
    <property type="term" value="C:membrane"/>
    <property type="evidence" value="ECO:0007669"/>
    <property type="project" value="GOC"/>
</dbReference>
<dbReference type="GO" id="GO:0016410">
    <property type="term" value="F:N-acyltransferase activity"/>
    <property type="evidence" value="ECO:0007669"/>
    <property type="project" value="InterPro"/>
</dbReference>
<dbReference type="GO" id="GO:0009245">
    <property type="term" value="P:lipid A biosynthetic process"/>
    <property type="evidence" value="ECO:0007669"/>
    <property type="project" value="UniProtKB-UniRule"/>
</dbReference>
<dbReference type="CDD" id="cd03352">
    <property type="entry name" value="LbH_LpxD"/>
    <property type="match status" value="1"/>
</dbReference>
<dbReference type="Gene3D" id="2.160.10.10">
    <property type="entry name" value="Hexapeptide repeat proteins"/>
    <property type="match status" value="1"/>
</dbReference>
<dbReference type="Gene3D" id="3.40.1390.10">
    <property type="entry name" value="MurE/MurF, N-terminal domain"/>
    <property type="match status" value="1"/>
</dbReference>
<dbReference type="HAMAP" id="MF_00523">
    <property type="entry name" value="LpxD"/>
    <property type="match status" value="1"/>
</dbReference>
<dbReference type="InterPro" id="IPR001451">
    <property type="entry name" value="Hexapep"/>
</dbReference>
<dbReference type="InterPro" id="IPR018357">
    <property type="entry name" value="Hexapep_transf_CS"/>
</dbReference>
<dbReference type="InterPro" id="IPR007691">
    <property type="entry name" value="LpxD"/>
</dbReference>
<dbReference type="InterPro" id="IPR011004">
    <property type="entry name" value="Trimer_LpxA-like_sf"/>
</dbReference>
<dbReference type="InterPro" id="IPR020573">
    <property type="entry name" value="UDP_GlcNAc_AcTrfase_non-rep"/>
</dbReference>
<dbReference type="NCBIfam" id="TIGR01853">
    <property type="entry name" value="lipid_A_lpxD"/>
    <property type="match status" value="1"/>
</dbReference>
<dbReference type="NCBIfam" id="NF002060">
    <property type="entry name" value="PRK00892.1"/>
    <property type="match status" value="1"/>
</dbReference>
<dbReference type="PANTHER" id="PTHR43378">
    <property type="entry name" value="UDP-3-O-ACYLGLUCOSAMINE N-ACYLTRANSFERASE"/>
    <property type="match status" value="1"/>
</dbReference>
<dbReference type="PANTHER" id="PTHR43378:SF2">
    <property type="entry name" value="UDP-3-O-ACYLGLUCOSAMINE N-ACYLTRANSFERASE 1, MITOCHONDRIAL-RELATED"/>
    <property type="match status" value="1"/>
</dbReference>
<dbReference type="Pfam" id="PF00132">
    <property type="entry name" value="Hexapep"/>
    <property type="match status" value="2"/>
</dbReference>
<dbReference type="Pfam" id="PF04613">
    <property type="entry name" value="LpxD"/>
    <property type="match status" value="1"/>
</dbReference>
<dbReference type="SUPFAM" id="SSF51161">
    <property type="entry name" value="Trimeric LpxA-like enzymes"/>
    <property type="match status" value="1"/>
</dbReference>
<dbReference type="PROSITE" id="PS00101">
    <property type="entry name" value="HEXAPEP_TRANSFERASES"/>
    <property type="match status" value="2"/>
</dbReference>
<proteinExistence type="inferred from homology"/>
<comment type="function">
    <text evidence="1">Catalyzes the N-acylation of UDP-3-O-acylglucosamine using 3-hydroxyacyl-ACP as the acyl donor. Is involved in the biosynthesis of lipid A, a phosphorylated glycolipid that anchors the lipopolysaccharide to the outer membrane of the cell.</text>
</comment>
<comment type="catalytic activity">
    <reaction evidence="1">
        <text>a UDP-3-O-[(3R)-3-hydroxyacyl]-alpha-D-glucosamine + a (3R)-hydroxyacyl-[ACP] = a UDP-2-N,3-O-bis[(3R)-3-hydroxyacyl]-alpha-D-glucosamine + holo-[ACP] + H(+)</text>
        <dbReference type="Rhea" id="RHEA:53836"/>
        <dbReference type="Rhea" id="RHEA-COMP:9685"/>
        <dbReference type="Rhea" id="RHEA-COMP:9945"/>
        <dbReference type="ChEBI" id="CHEBI:15378"/>
        <dbReference type="ChEBI" id="CHEBI:64479"/>
        <dbReference type="ChEBI" id="CHEBI:78827"/>
        <dbReference type="ChEBI" id="CHEBI:137740"/>
        <dbReference type="ChEBI" id="CHEBI:137748"/>
        <dbReference type="EC" id="2.3.1.191"/>
    </reaction>
</comment>
<comment type="pathway">
    <text evidence="1">Bacterial outer membrane biogenesis; LPS lipid A biosynthesis.</text>
</comment>
<comment type="subunit">
    <text evidence="1">Homotrimer.</text>
</comment>
<comment type="similarity">
    <text evidence="1">Belongs to the transferase hexapeptide repeat family. LpxD subfamily.</text>
</comment>
<reference key="1">
    <citation type="submission" date="2006-03" db="EMBL/GenBank/DDBJ databases">
        <title>Complete sequence of Rhodopseudomonas palustris BisB18.</title>
        <authorList>
            <consortium name="US DOE Joint Genome Institute"/>
            <person name="Copeland A."/>
            <person name="Lucas S."/>
            <person name="Lapidus A."/>
            <person name="Barry K."/>
            <person name="Detter J.C."/>
            <person name="Glavina del Rio T."/>
            <person name="Hammon N."/>
            <person name="Israni S."/>
            <person name="Dalin E."/>
            <person name="Tice H."/>
            <person name="Pitluck S."/>
            <person name="Chain P."/>
            <person name="Malfatti S."/>
            <person name="Shin M."/>
            <person name="Vergez L."/>
            <person name="Schmutz J."/>
            <person name="Larimer F."/>
            <person name="Land M."/>
            <person name="Hauser L."/>
            <person name="Pelletier D.A."/>
            <person name="Kyrpides N."/>
            <person name="Anderson I."/>
            <person name="Oda Y."/>
            <person name="Harwood C.S."/>
            <person name="Richardson P."/>
        </authorList>
    </citation>
    <scope>NUCLEOTIDE SEQUENCE [LARGE SCALE GENOMIC DNA]</scope>
    <source>
        <strain>BisB18</strain>
    </source>
</reference>
<organism>
    <name type="scientific">Rhodopseudomonas palustris (strain BisB18)</name>
    <dbReference type="NCBI Taxonomy" id="316056"/>
    <lineage>
        <taxon>Bacteria</taxon>
        <taxon>Pseudomonadati</taxon>
        <taxon>Pseudomonadota</taxon>
        <taxon>Alphaproteobacteria</taxon>
        <taxon>Hyphomicrobiales</taxon>
        <taxon>Nitrobacteraceae</taxon>
        <taxon>Rhodopseudomonas</taxon>
    </lineage>
</organism>